<comment type="function">
    <text evidence="1">Pyrophosphatase that catalyzes the hydrolysis of nucleoside triphosphates to their monophosphate derivatives, with a high preference for the non-canonical purine nucleotides XTP (xanthosine triphosphate), dITP (deoxyinosine triphosphate) and ITP. Seems to function as a house-cleaning enzyme that removes non-canonical purine nucleotides from the nucleotide pool, thus preventing their incorporation into DNA/RNA and avoiding chromosomal lesions.</text>
</comment>
<comment type="catalytic activity">
    <reaction evidence="1">
        <text>XTP + H2O = XMP + diphosphate + H(+)</text>
        <dbReference type="Rhea" id="RHEA:28610"/>
        <dbReference type="ChEBI" id="CHEBI:15377"/>
        <dbReference type="ChEBI" id="CHEBI:15378"/>
        <dbReference type="ChEBI" id="CHEBI:33019"/>
        <dbReference type="ChEBI" id="CHEBI:57464"/>
        <dbReference type="ChEBI" id="CHEBI:61314"/>
        <dbReference type="EC" id="3.6.1.66"/>
    </reaction>
</comment>
<comment type="catalytic activity">
    <reaction evidence="1">
        <text>dITP + H2O = dIMP + diphosphate + H(+)</text>
        <dbReference type="Rhea" id="RHEA:28342"/>
        <dbReference type="ChEBI" id="CHEBI:15377"/>
        <dbReference type="ChEBI" id="CHEBI:15378"/>
        <dbReference type="ChEBI" id="CHEBI:33019"/>
        <dbReference type="ChEBI" id="CHEBI:61194"/>
        <dbReference type="ChEBI" id="CHEBI:61382"/>
        <dbReference type="EC" id="3.6.1.66"/>
    </reaction>
</comment>
<comment type="catalytic activity">
    <reaction evidence="1">
        <text>ITP + H2O = IMP + diphosphate + H(+)</text>
        <dbReference type="Rhea" id="RHEA:29399"/>
        <dbReference type="ChEBI" id="CHEBI:15377"/>
        <dbReference type="ChEBI" id="CHEBI:15378"/>
        <dbReference type="ChEBI" id="CHEBI:33019"/>
        <dbReference type="ChEBI" id="CHEBI:58053"/>
        <dbReference type="ChEBI" id="CHEBI:61402"/>
        <dbReference type="EC" id="3.6.1.66"/>
    </reaction>
</comment>
<comment type="cofactor">
    <cofactor evidence="1">
        <name>Mg(2+)</name>
        <dbReference type="ChEBI" id="CHEBI:18420"/>
    </cofactor>
    <text evidence="1">Binds 1 Mg(2+) ion per subunit.</text>
</comment>
<comment type="subunit">
    <text evidence="1">Homodimer.</text>
</comment>
<comment type="similarity">
    <text evidence="1">Belongs to the HAM1 NTPase family.</text>
</comment>
<feature type="chain" id="PRO_0000178258" description="dITP/XTP pyrophosphatase">
    <location>
        <begin position="1"/>
        <end position="193"/>
    </location>
</feature>
<feature type="active site" description="Proton acceptor" evidence="1">
    <location>
        <position position="65"/>
    </location>
</feature>
<feature type="binding site" evidence="1">
    <location>
        <begin position="7"/>
        <end position="12"/>
    </location>
    <ligand>
        <name>substrate</name>
    </ligand>
</feature>
<feature type="binding site" evidence="1">
    <location>
        <position position="65"/>
    </location>
    <ligand>
        <name>Mg(2+)</name>
        <dbReference type="ChEBI" id="CHEBI:18420"/>
    </ligand>
</feature>
<feature type="binding site" evidence="1">
    <location>
        <position position="66"/>
    </location>
    <ligand>
        <name>substrate</name>
    </ligand>
</feature>
<feature type="binding site" evidence="1">
    <location>
        <begin position="144"/>
        <end position="147"/>
    </location>
    <ligand>
        <name>substrate</name>
    </ligand>
</feature>
<feature type="binding site" evidence="1">
    <location>
        <position position="167"/>
    </location>
    <ligand>
        <name>substrate</name>
    </ligand>
</feature>
<feature type="binding site" evidence="1">
    <location>
        <begin position="172"/>
        <end position="173"/>
    </location>
    <ligand>
        <name>substrate</name>
    </ligand>
</feature>
<evidence type="ECO:0000255" key="1">
    <source>
        <dbReference type="HAMAP-Rule" id="MF_01405"/>
    </source>
</evidence>
<proteinExistence type="inferred from homology"/>
<dbReference type="EC" id="3.6.1.66" evidence="1"/>
<dbReference type="EMBL" id="BX251412">
    <property type="protein sequence ID" value="CAD67302.1"/>
    <property type="molecule type" value="Genomic_DNA"/>
</dbReference>
<dbReference type="SMR" id="Q83HF7"/>
<dbReference type="GeneID" id="67388417"/>
<dbReference type="KEGG" id="tws:TW639"/>
<dbReference type="HOGENOM" id="CLU_082080_0_1_11"/>
<dbReference type="GO" id="GO:0005829">
    <property type="term" value="C:cytosol"/>
    <property type="evidence" value="ECO:0007669"/>
    <property type="project" value="TreeGrafter"/>
</dbReference>
<dbReference type="GO" id="GO:0035870">
    <property type="term" value="F:dITP diphosphatase activity"/>
    <property type="evidence" value="ECO:0007669"/>
    <property type="project" value="RHEA"/>
</dbReference>
<dbReference type="GO" id="GO:0036220">
    <property type="term" value="F:ITP diphosphatase activity"/>
    <property type="evidence" value="ECO:0007669"/>
    <property type="project" value="UniProtKB-EC"/>
</dbReference>
<dbReference type="GO" id="GO:0046872">
    <property type="term" value="F:metal ion binding"/>
    <property type="evidence" value="ECO:0007669"/>
    <property type="project" value="UniProtKB-KW"/>
</dbReference>
<dbReference type="GO" id="GO:0000166">
    <property type="term" value="F:nucleotide binding"/>
    <property type="evidence" value="ECO:0007669"/>
    <property type="project" value="UniProtKB-KW"/>
</dbReference>
<dbReference type="GO" id="GO:0017111">
    <property type="term" value="F:ribonucleoside triphosphate phosphatase activity"/>
    <property type="evidence" value="ECO:0007669"/>
    <property type="project" value="InterPro"/>
</dbReference>
<dbReference type="GO" id="GO:0036222">
    <property type="term" value="F:XTP diphosphatase activity"/>
    <property type="evidence" value="ECO:0007669"/>
    <property type="project" value="RHEA"/>
</dbReference>
<dbReference type="GO" id="GO:0009117">
    <property type="term" value="P:nucleotide metabolic process"/>
    <property type="evidence" value="ECO:0007669"/>
    <property type="project" value="UniProtKB-KW"/>
</dbReference>
<dbReference type="GO" id="GO:0009146">
    <property type="term" value="P:purine nucleoside triphosphate catabolic process"/>
    <property type="evidence" value="ECO:0007669"/>
    <property type="project" value="UniProtKB-UniRule"/>
</dbReference>
<dbReference type="CDD" id="cd00515">
    <property type="entry name" value="HAM1"/>
    <property type="match status" value="1"/>
</dbReference>
<dbReference type="FunFam" id="3.90.950.10:FF:000001">
    <property type="entry name" value="dITP/XTP pyrophosphatase"/>
    <property type="match status" value="1"/>
</dbReference>
<dbReference type="Gene3D" id="3.90.950.10">
    <property type="match status" value="1"/>
</dbReference>
<dbReference type="HAMAP" id="MF_01405">
    <property type="entry name" value="Non_canon_purine_NTPase"/>
    <property type="match status" value="1"/>
</dbReference>
<dbReference type="InterPro" id="IPR020922">
    <property type="entry name" value="dITP/XTP_pyrophosphatase"/>
</dbReference>
<dbReference type="InterPro" id="IPR029001">
    <property type="entry name" value="ITPase-like_fam"/>
</dbReference>
<dbReference type="InterPro" id="IPR002637">
    <property type="entry name" value="RdgB/HAM1"/>
</dbReference>
<dbReference type="NCBIfam" id="TIGR00042">
    <property type="entry name" value="RdgB/HAM1 family non-canonical purine NTP pyrophosphatase"/>
    <property type="match status" value="1"/>
</dbReference>
<dbReference type="PANTHER" id="PTHR11067:SF9">
    <property type="entry name" value="INOSINE TRIPHOSPHATE PYROPHOSPHATASE"/>
    <property type="match status" value="1"/>
</dbReference>
<dbReference type="PANTHER" id="PTHR11067">
    <property type="entry name" value="INOSINE TRIPHOSPHATE PYROPHOSPHATASE/HAM1 PROTEIN"/>
    <property type="match status" value="1"/>
</dbReference>
<dbReference type="Pfam" id="PF01725">
    <property type="entry name" value="Ham1p_like"/>
    <property type="match status" value="1"/>
</dbReference>
<dbReference type="SUPFAM" id="SSF52972">
    <property type="entry name" value="ITPase-like"/>
    <property type="match status" value="1"/>
</dbReference>
<organism>
    <name type="scientific">Tropheryma whipplei (strain TW08/27)</name>
    <name type="common">Whipple's bacillus</name>
    <dbReference type="NCBI Taxonomy" id="218496"/>
    <lineage>
        <taxon>Bacteria</taxon>
        <taxon>Bacillati</taxon>
        <taxon>Actinomycetota</taxon>
        <taxon>Actinomycetes</taxon>
        <taxon>Micrococcales</taxon>
        <taxon>Tropherymataceae</taxon>
        <taxon>Tropheryma</taxon>
    </lineage>
</organism>
<name>IXTPA_TROW8</name>
<sequence length="193" mass="21111">MEIVFVSENENKITEAREILLPLGFQPIFCGVTCRETGLTFTENAVLKAQAAVGSVKDVPIMADDSGICVDALNGMPGVLSSRWSQDGRNIDLLLWQMRDVPDVHRTAHFVCSIACVMPNTEVRTVSSVWHGRILHVPDGTGGFGYDPVFLPDGYSVSAAGLGSDLKNRISHRYKALRLMSSLLKRTYSSCHA</sequence>
<accession>Q83HF7</accession>
<keyword id="KW-0378">Hydrolase</keyword>
<keyword id="KW-0460">Magnesium</keyword>
<keyword id="KW-0479">Metal-binding</keyword>
<keyword id="KW-0546">Nucleotide metabolism</keyword>
<keyword id="KW-0547">Nucleotide-binding</keyword>
<gene>
    <name type="ordered locus">TW639</name>
</gene>
<protein>
    <recommendedName>
        <fullName evidence="1">dITP/XTP pyrophosphatase</fullName>
        <ecNumber evidence="1">3.6.1.66</ecNumber>
    </recommendedName>
    <alternativeName>
        <fullName evidence="1">Non-canonical purine NTP pyrophosphatase</fullName>
    </alternativeName>
    <alternativeName>
        <fullName evidence="1">Non-standard purine NTP pyrophosphatase</fullName>
    </alternativeName>
    <alternativeName>
        <fullName evidence="1">Nucleoside-triphosphate diphosphatase</fullName>
    </alternativeName>
    <alternativeName>
        <fullName evidence="1">Nucleoside-triphosphate pyrophosphatase</fullName>
        <shortName evidence="1">NTPase</shortName>
    </alternativeName>
</protein>
<reference key="1">
    <citation type="journal article" date="2003" name="Lancet">
        <title>Sequencing and analysis of the genome of the Whipple's disease bacterium Tropheryma whipplei.</title>
        <authorList>
            <person name="Bentley S.D."/>
            <person name="Maiwald M."/>
            <person name="Murphy L.D."/>
            <person name="Pallen M.J."/>
            <person name="Yeats C.A."/>
            <person name="Dover L.G."/>
            <person name="Norbertczak H.T."/>
            <person name="Besra G.S."/>
            <person name="Quail M.A."/>
            <person name="Harris D.E."/>
            <person name="von Herbay A."/>
            <person name="Goble A."/>
            <person name="Rutter S."/>
            <person name="Squares R."/>
            <person name="Squares S."/>
            <person name="Barrell B.G."/>
            <person name="Parkhill J."/>
            <person name="Relman D.A."/>
        </authorList>
    </citation>
    <scope>NUCLEOTIDE SEQUENCE [LARGE SCALE GENOMIC DNA]</scope>
    <source>
        <strain>TW08/27</strain>
    </source>
</reference>